<dbReference type="EMBL" id="L07769">
    <property type="protein sequence ID" value="AAA67899.1"/>
    <property type="molecule type" value="mRNA"/>
</dbReference>
<dbReference type="EMBL" id="U06643">
    <property type="protein sequence ID" value="AAA86820.1"/>
    <property type="molecule type" value="mRNA"/>
</dbReference>
<dbReference type="EMBL" id="CR456917">
    <property type="protein sequence ID" value="CAG33198.1"/>
    <property type="molecule type" value="mRNA"/>
</dbReference>
<dbReference type="EMBL" id="CH471126">
    <property type="protein sequence ID" value="EAW56817.1"/>
    <property type="molecule type" value="Genomic_DNA"/>
</dbReference>
<dbReference type="EMBL" id="CH471126">
    <property type="protein sequence ID" value="EAW56818.1"/>
    <property type="molecule type" value="Genomic_DNA"/>
</dbReference>
<dbReference type="EMBL" id="BC042911">
    <property type="protein sequence ID" value="AAH42911.2"/>
    <property type="molecule type" value="mRNA"/>
</dbReference>
<dbReference type="EMBL" id="BC061588">
    <property type="protein sequence ID" value="AAH61588.1"/>
    <property type="molecule type" value="mRNA"/>
</dbReference>
<dbReference type="EMBL" id="BC073743">
    <property type="protein sequence ID" value="AAH73743.1"/>
    <property type="molecule type" value="mRNA"/>
</dbReference>
<dbReference type="CCDS" id="CCDS42565.1"/>
<dbReference type="PIR" id="I55469">
    <property type="entry name" value="I55469"/>
</dbReference>
<dbReference type="RefSeq" id="NP_001035972.1">
    <property type="nucleotide sequence ID" value="NM_001042507.3"/>
</dbReference>
<dbReference type="RefSeq" id="NP_002298.1">
    <property type="nucleotide sequence ID" value="NM_002307.4"/>
</dbReference>
<dbReference type="PDB" id="1BKZ">
    <property type="method" value="X-ray"/>
    <property type="resolution" value="1.90 A"/>
    <property type="chains" value="A/B=2-136"/>
</dbReference>
<dbReference type="PDB" id="2GAL">
    <property type="method" value="X-ray"/>
    <property type="resolution" value="2.00 A"/>
    <property type="chains" value="A/B=2-136"/>
</dbReference>
<dbReference type="PDB" id="3GAL">
    <property type="method" value="X-ray"/>
    <property type="resolution" value="1.90 A"/>
    <property type="chains" value="A/B=2-136"/>
</dbReference>
<dbReference type="PDB" id="3ZXE">
    <property type="method" value="X-ray"/>
    <property type="resolution" value="1.67 A"/>
    <property type="chains" value="A/B=4-136"/>
</dbReference>
<dbReference type="PDB" id="3ZXF">
    <property type="method" value="X-ray"/>
    <property type="resolution" value="1.38 A"/>
    <property type="chains" value="A/B=1-136"/>
</dbReference>
<dbReference type="PDB" id="4GAL">
    <property type="method" value="X-ray"/>
    <property type="resolution" value="1.95 A"/>
    <property type="chains" value="A/B=2-136"/>
</dbReference>
<dbReference type="PDB" id="4UW3">
    <property type="method" value="X-ray"/>
    <property type="resolution" value="1.48 A"/>
    <property type="chains" value="A/B=1-136"/>
</dbReference>
<dbReference type="PDB" id="4UW4">
    <property type="method" value="X-ray"/>
    <property type="resolution" value="1.77 A"/>
    <property type="chains" value="A/B=1-136"/>
</dbReference>
<dbReference type="PDB" id="4UW5">
    <property type="method" value="X-ray"/>
    <property type="resolution" value="2.04 A"/>
    <property type="chains" value="A/B/C/D/E/F=1-136"/>
</dbReference>
<dbReference type="PDB" id="4UW6">
    <property type="method" value="X-ray"/>
    <property type="resolution" value="1.79 A"/>
    <property type="chains" value="A/B=1-136"/>
</dbReference>
<dbReference type="PDB" id="4XBQ">
    <property type="method" value="X-ray"/>
    <property type="resolution" value="2.23 A"/>
    <property type="chains" value="A/B=1-136"/>
</dbReference>
<dbReference type="PDB" id="4Y26">
    <property type="method" value="X-ray"/>
    <property type="resolution" value="2.61 A"/>
    <property type="chains" value="A/B=4-136"/>
</dbReference>
<dbReference type="PDB" id="5GAL">
    <property type="method" value="X-ray"/>
    <property type="resolution" value="2.00 A"/>
    <property type="chains" value="A/B=2-136"/>
</dbReference>
<dbReference type="PDB" id="5H9Q">
    <property type="method" value="X-ray"/>
    <property type="resolution" value="1.93 A"/>
    <property type="chains" value="A/B=1-136"/>
</dbReference>
<dbReference type="PDB" id="5H9S">
    <property type="method" value="X-ray"/>
    <property type="resolution" value="1.82 A"/>
    <property type="chains" value="A/B=1-136"/>
</dbReference>
<dbReference type="PDB" id="6VTO">
    <property type="method" value="X-ray"/>
    <property type="resolution" value="1.69 A"/>
    <property type="chains" value="A/B=2-136"/>
</dbReference>
<dbReference type="PDB" id="6VTP">
    <property type="method" value="X-ray"/>
    <property type="resolution" value="2.30 A"/>
    <property type="chains" value="A/B=2-136"/>
</dbReference>
<dbReference type="PDB" id="6VTQ">
    <property type="method" value="X-ray"/>
    <property type="resolution" value="1.95 A"/>
    <property type="chains" value="A/B=2-136"/>
</dbReference>
<dbReference type="PDB" id="6VTR">
    <property type="method" value="X-ray"/>
    <property type="resolution" value="2.30 A"/>
    <property type="chains" value="A/B=2-136"/>
</dbReference>
<dbReference type="PDB" id="6VTS">
    <property type="method" value="X-ray"/>
    <property type="resolution" value="1.90 A"/>
    <property type="chains" value="A/B=2-136"/>
</dbReference>
<dbReference type="PDB" id="7N4O">
    <property type="method" value="X-ray"/>
    <property type="resolution" value="2.05 A"/>
    <property type="chains" value="A/B=2-136"/>
</dbReference>
<dbReference type="PDB" id="7N57">
    <property type="method" value="X-ray"/>
    <property type="resolution" value="1.83 A"/>
    <property type="chains" value="A/B=2-136"/>
</dbReference>
<dbReference type="PDB" id="7N6C">
    <property type="method" value="X-ray"/>
    <property type="resolution" value="2.10 A"/>
    <property type="chains" value="A/B=2-136"/>
</dbReference>
<dbReference type="PDB" id="7N8D">
    <property type="method" value="X-ray"/>
    <property type="resolution" value="2.49 A"/>
    <property type="chains" value="A/B=2-136"/>
</dbReference>
<dbReference type="PDB" id="7N8G">
    <property type="method" value="X-ray"/>
    <property type="resolution" value="1.95 A"/>
    <property type="chains" value="A/B=2-136"/>
</dbReference>
<dbReference type="PDB" id="7N96">
    <property type="method" value="X-ray"/>
    <property type="resolution" value="2.38 A"/>
    <property type="chains" value="A/B=2-136"/>
</dbReference>
<dbReference type="PDB" id="7RDG">
    <property type="method" value="X-ray"/>
    <property type="resolution" value="3.00 A"/>
    <property type="chains" value="A/B/C/D=2-136"/>
</dbReference>
<dbReference type="PDB" id="7TKW">
    <property type="method" value="X-ray"/>
    <property type="resolution" value="1.85 A"/>
    <property type="chains" value="A/B=2-136"/>
</dbReference>
<dbReference type="PDB" id="7TKX">
    <property type="method" value="X-ray"/>
    <property type="resolution" value="1.83 A"/>
    <property type="chains" value="A/B=2-136"/>
</dbReference>
<dbReference type="PDB" id="7TKY">
    <property type="method" value="X-ray"/>
    <property type="resolution" value="2.53 A"/>
    <property type="chains" value="A/B=2-136"/>
</dbReference>
<dbReference type="PDB" id="7TKZ">
    <property type="method" value="X-ray"/>
    <property type="resolution" value="1.83 A"/>
    <property type="chains" value="A/B=2-136"/>
</dbReference>
<dbReference type="PDB" id="7TRN">
    <property type="method" value="X-ray"/>
    <property type="resolution" value="1.95 A"/>
    <property type="chains" value="A/B/C/D=2-136"/>
</dbReference>
<dbReference type="PDB" id="7TRO">
    <property type="method" value="X-ray"/>
    <property type="resolution" value="1.80 A"/>
    <property type="chains" value="A/B=2-136"/>
</dbReference>
<dbReference type="PDB" id="7XAC">
    <property type="method" value="X-ray"/>
    <property type="resolution" value="1.80 A"/>
    <property type="chains" value="A/B=1-136"/>
</dbReference>
<dbReference type="PDB" id="7XBL">
    <property type="method" value="X-ray"/>
    <property type="resolution" value="2.00 A"/>
    <property type="chains" value="A/B=1-136"/>
</dbReference>
<dbReference type="PDBsum" id="1BKZ"/>
<dbReference type="PDBsum" id="2GAL"/>
<dbReference type="PDBsum" id="3GAL"/>
<dbReference type="PDBsum" id="3ZXE"/>
<dbReference type="PDBsum" id="3ZXF"/>
<dbReference type="PDBsum" id="4GAL"/>
<dbReference type="PDBsum" id="4UW3"/>
<dbReference type="PDBsum" id="4UW4"/>
<dbReference type="PDBsum" id="4UW5"/>
<dbReference type="PDBsum" id="4UW6"/>
<dbReference type="PDBsum" id="4XBQ"/>
<dbReference type="PDBsum" id="4Y26"/>
<dbReference type="PDBsum" id="5GAL"/>
<dbReference type="PDBsum" id="5H9Q"/>
<dbReference type="PDBsum" id="5H9S"/>
<dbReference type="PDBsum" id="6VTO"/>
<dbReference type="PDBsum" id="6VTP"/>
<dbReference type="PDBsum" id="6VTQ"/>
<dbReference type="PDBsum" id="6VTR"/>
<dbReference type="PDBsum" id="6VTS"/>
<dbReference type="PDBsum" id="7N4O"/>
<dbReference type="PDBsum" id="7N57"/>
<dbReference type="PDBsum" id="7N6C"/>
<dbReference type="PDBsum" id="7N8D"/>
<dbReference type="PDBsum" id="7N8G"/>
<dbReference type="PDBsum" id="7N96"/>
<dbReference type="PDBsum" id="7RDG"/>
<dbReference type="PDBsum" id="7TKW"/>
<dbReference type="PDBsum" id="7TKX"/>
<dbReference type="PDBsum" id="7TKY"/>
<dbReference type="PDBsum" id="7TKZ"/>
<dbReference type="PDBsum" id="7TRN"/>
<dbReference type="PDBsum" id="7TRO"/>
<dbReference type="PDBsum" id="7XAC"/>
<dbReference type="PDBsum" id="7XBL"/>
<dbReference type="BMRB" id="P47929"/>
<dbReference type="SMR" id="P47929"/>
<dbReference type="BioGRID" id="110154">
    <property type="interactions" value="139"/>
</dbReference>
<dbReference type="BioGRID" id="575831">
    <property type="interactions" value="106"/>
</dbReference>
<dbReference type="FunCoup" id="P47929">
    <property type="interactions" value="490"/>
</dbReference>
<dbReference type="IntAct" id="P47929">
    <property type="interactions" value="128"/>
</dbReference>
<dbReference type="MINT" id="P47929"/>
<dbReference type="STRING" id="9606.ENSP00000313571"/>
<dbReference type="BindingDB" id="P47929"/>
<dbReference type="ChEMBL" id="CHEMBL5008"/>
<dbReference type="DrugBank" id="DB02678">
    <property type="generic name" value="beta-D-Galactosamine"/>
</dbReference>
<dbReference type="DrugBank" id="DB02379">
    <property type="generic name" value="Beta-D-Glucose"/>
</dbReference>
<dbReference type="UniLectin" id="P47929"/>
<dbReference type="GlyGen" id="P47929">
    <property type="glycosylation" value="1 site, 1 O-linked glycan (1 site)"/>
</dbReference>
<dbReference type="iPTMnet" id="P47929"/>
<dbReference type="PhosphoSitePlus" id="P47929"/>
<dbReference type="SwissPalm" id="P47929"/>
<dbReference type="BioMuta" id="LGALS7B"/>
<dbReference type="DMDM" id="1346431"/>
<dbReference type="jPOST" id="P47929"/>
<dbReference type="MassIVE" id="P47929"/>
<dbReference type="PaxDb" id="9606-ENSP00000313571"/>
<dbReference type="PeptideAtlas" id="P47929"/>
<dbReference type="PRIDE" id="P47929"/>
<dbReference type="ProteomicsDB" id="55824"/>
<dbReference type="ABCD" id="P47929">
    <property type="antibodies" value="12 sequenced antibodies"/>
</dbReference>
<dbReference type="Antibodypedia" id="16627">
    <property type="antibodies" value="301 antibodies from 19 providers"/>
</dbReference>
<dbReference type="Antibodypedia" id="652">
    <property type="antibodies" value="180 antibodies from 26 providers"/>
</dbReference>
<dbReference type="DNASU" id="653499"/>
<dbReference type="Ensembl" id="ENST00000314980.5">
    <property type="protein sequence ID" value="ENSP00000313571.3"/>
    <property type="gene ID" value="ENSG00000178934.5"/>
</dbReference>
<dbReference type="Ensembl" id="ENST00000378626.5">
    <property type="protein sequence ID" value="ENSP00000367891.3"/>
    <property type="gene ID" value="ENSG00000205076.5"/>
</dbReference>
<dbReference type="Ensembl" id="ENST00000634448.2">
    <property type="protein sequence ID" value="ENSP00000489395.1"/>
    <property type="gene ID" value="ENSG00000282902.2"/>
</dbReference>
<dbReference type="Ensembl" id="ENST00000634800.1">
    <property type="protein sequence ID" value="ENSP00000489582.1"/>
    <property type="gene ID" value="ENSG00000283082.1"/>
</dbReference>
<dbReference type="GeneID" id="3963"/>
<dbReference type="GeneID" id="653499"/>
<dbReference type="KEGG" id="hsa:3963"/>
<dbReference type="KEGG" id="hsa:653499"/>
<dbReference type="MANE-Select" id="ENST00000314980.5">
    <property type="protein sequence ID" value="ENSP00000313571.3"/>
    <property type="RefSeq nucleotide sequence ID" value="NM_001042507.4"/>
    <property type="RefSeq protein sequence ID" value="NP_001035972.1"/>
</dbReference>
<dbReference type="MANE-Select" id="ENST00000378626.5">
    <property type="protein sequence ID" value="ENSP00000367891.3"/>
    <property type="RefSeq nucleotide sequence ID" value="NM_002307.4"/>
    <property type="RefSeq protein sequence ID" value="NP_002298.1"/>
</dbReference>
<dbReference type="UCSC" id="uc002oje.4">
    <property type="organism name" value="human"/>
</dbReference>
<dbReference type="AGR" id="HGNC:34447"/>
<dbReference type="AGR" id="HGNC:6568"/>
<dbReference type="CTD" id="3963"/>
<dbReference type="CTD" id="653499"/>
<dbReference type="DisGeNET" id="3963"/>
<dbReference type="DisGeNET" id="653499"/>
<dbReference type="GeneCards" id="LGALS7"/>
<dbReference type="GeneCards" id="LGALS7B"/>
<dbReference type="HGNC" id="HGNC:6568">
    <property type="gene designation" value="LGALS7"/>
</dbReference>
<dbReference type="HGNC" id="HGNC:34447">
    <property type="gene designation" value="LGALS7B"/>
</dbReference>
<dbReference type="HPA" id="ENSG00000178934">
    <property type="expression patterns" value="Tissue enriched (skin)"/>
</dbReference>
<dbReference type="HPA" id="ENSG00000205076">
    <property type="expression patterns" value="Group enriched (esophagus, skin)"/>
</dbReference>
<dbReference type="MIM" id="600615">
    <property type="type" value="gene"/>
</dbReference>
<dbReference type="MIM" id="617139">
    <property type="type" value="gene"/>
</dbReference>
<dbReference type="neXtProt" id="NX_P47929"/>
<dbReference type="OpenTargets" id="ENSG00000178934"/>
<dbReference type="OpenTargets" id="ENSG00000205076"/>
<dbReference type="PharmGKB" id="PA162393892"/>
<dbReference type="VEuPathDB" id="HostDB:ENSG00000178934"/>
<dbReference type="VEuPathDB" id="HostDB:ENSG00000205076"/>
<dbReference type="eggNOG" id="KOG3587">
    <property type="taxonomic scope" value="Eukaryota"/>
</dbReference>
<dbReference type="GeneTree" id="ENSGT00940000155398"/>
<dbReference type="HOGENOM" id="CLU_037794_3_3_1"/>
<dbReference type="InParanoid" id="P47929"/>
<dbReference type="OMA" id="GWESEDR"/>
<dbReference type="OrthoDB" id="6251307at2759"/>
<dbReference type="PAN-GO" id="P47929">
    <property type="GO annotations" value="7 GO annotations based on evolutionary models"/>
</dbReference>
<dbReference type="PhylomeDB" id="P47929"/>
<dbReference type="TreeFam" id="TF315551"/>
<dbReference type="PathwayCommons" id="P47929"/>
<dbReference type="Reactome" id="R-HSA-9725554">
    <property type="pathway name" value="Differentiation of Keratinocytes in Interfollicular Epidermis in Mammalian Skin"/>
</dbReference>
<dbReference type="SignaLink" id="P47929"/>
<dbReference type="BioGRID-ORCS" id="3963">
    <property type="hits" value="10 hits in 1047 CRISPR screens"/>
</dbReference>
<dbReference type="BioGRID-ORCS" id="653499">
    <property type="hits" value="27 hits in 1037 CRISPR screens"/>
</dbReference>
<dbReference type="CD-CODE" id="232F8A39">
    <property type="entry name" value="P-body"/>
</dbReference>
<dbReference type="EvolutionaryTrace" id="P47929"/>
<dbReference type="GeneWiki" id="LGALS7"/>
<dbReference type="Pharos" id="P47929">
    <property type="development level" value="Tbio"/>
</dbReference>
<dbReference type="PRO" id="PR:P47929"/>
<dbReference type="Proteomes" id="UP000005640">
    <property type="component" value="Chromosome 19"/>
</dbReference>
<dbReference type="RNAct" id="P47929">
    <property type="molecule type" value="protein"/>
</dbReference>
<dbReference type="Bgee" id="ENSG00000178934">
    <property type="expression patterns" value="Expressed in skin of abdomen and 74 other cell types or tissues"/>
</dbReference>
<dbReference type="ExpressionAtlas" id="P47929">
    <property type="expression patterns" value="baseline and differential"/>
</dbReference>
<dbReference type="GO" id="GO:0005737">
    <property type="term" value="C:cytoplasm"/>
    <property type="evidence" value="ECO:0007669"/>
    <property type="project" value="UniProtKB-SubCell"/>
</dbReference>
<dbReference type="GO" id="GO:0070062">
    <property type="term" value="C:extracellular exosome"/>
    <property type="evidence" value="ECO:0007005"/>
    <property type="project" value="UniProtKB"/>
</dbReference>
<dbReference type="GO" id="GO:0005615">
    <property type="term" value="C:extracellular space"/>
    <property type="evidence" value="ECO:0000304"/>
    <property type="project" value="ProtInc"/>
</dbReference>
<dbReference type="GO" id="GO:0005634">
    <property type="term" value="C:nucleus"/>
    <property type="evidence" value="ECO:0007669"/>
    <property type="project" value="UniProtKB-SubCell"/>
</dbReference>
<dbReference type="GO" id="GO:0030246">
    <property type="term" value="F:carbohydrate binding"/>
    <property type="evidence" value="ECO:0000318"/>
    <property type="project" value="GO_Central"/>
</dbReference>
<dbReference type="GO" id="GO:0006915">
    <property type="term" value="P:apoptotic process"/>
    <property type="evidence" value="ECO:0007669"/>
    <property type="project" value="UniProtKB-KW"/>
</dbReference>
<dbReference type="GO" id="GO:0007157">
    <property type="term" value="P:heterophilic cell-cell adhesion via plasma membrane cell adhesion molecules"/>
    <property type="evidence" value="ECO:0000304"/>
    <property type="project" value="ProtInc"/>
</dbReference>
<dbReference type="CDD" id="cd00070">
    <property type="entry name" value="GLECT"/>
    <property type="match status" value="1"/>
</dbReference>
<dbReference type="FunFam" id="2.60.120.200:FF:000021">
    <property type="entry name" value="Galectin"/>
    <property type="match status" value="1"/>
</dbReference>
<dbReference type="Gene3D" id="2.60.120.200">
    <property type="match status" value="1"/>
</dbReference>
<dbReference type="InterPro" id="IPR013320">
    <property type="entry name" value="ConA-like_dom_sf"/>
</dbReference>
<dbReference type="InterPro" id="IPR044156">
    <property type="entry name" value="Galectin-like"/>
</dbReference>
<dbReference type="InterPro" id="IPR001079">
    <property type="entry name" value="Galectin_CRD"/>
</dbReference>
<dbReference type="PANTHER" id="PTHR11346">
    <property type="entry name" value="GALECTIN"/>
    <property type="match status" value="1"/>
</dbReference>
<dbReference type="PANTHER" id="PTHR11346:SF107">
    <property type="entry name" value="GALECTIN-7"/>
    <property type="match status" value="1"/>
</dbReference>
<dbReference type="Pfam" id="PF00337">
    <property type="entry name" value="Gal-bind_lectin"/>
    <property type="match status" value="1"/>
</dbReference>
<dbReference type="SMART" id="SM00908">
    <property type="entry name" value="Gal-bind_lectin"/>
    <property type="match status" value="1"/>
</dbReference>
<dbReference type="SMART" id="SM00276">
    <property type="entry name" value="GLECT"/>
    <property type="match status" value="1"/>
</dbReference>
<dbReference type="SUPFAM" id="SSF49899">
    <property type="entry name" value="Concanavalin A-like lectins/glucanases"/>
    <property type="match status" value="1"/>
</dbReference>
<dbReference type="PROSITE" id="PS51304">
    <property type="entry name" value="GALECTIN"/>
    <property type="match status" value="1"/>
</dbReference>
<accession>P47929</accession>
<accession>Q6IB87</accession>
<evidence type="ECO:0000255" key="1"/>
<evidence type="ECO:0000255" key="2">
    <source>
        <dbReference type="PROSITE-ProRule" id="PRU00639"/>
    </source>
</evidence>
<evidence type="ECO:0000269" key="3">
    <source>
    </source>
</evidence>
<evidence type="ECO:0000305" key="4"/>
<evidence type="ECO:0007829" key="5">
    <source>
        <dbReference type="PDB" id="3ZXF"/>
    </source>
</evidence>
<reference key="1">
    <citation type="journal article" date="1995" name="J. Biol. Chem.">
        <title>Cloning, expression, and chromosome mapping of human galectin-7.</title>
        <authorList>
            <person name="Madsen P."/>
            <person name="Rasmussen H.H."/>
            <person name="Flint T."/>
            <person name="Gromov P."/>
            <person name="Kruse T.A."/>
            <person name="Honore B."/>
            <person name="Vorum H."/>
            <person name="Celis J.E."/>
        </authorList>
    </citation>
    <scope>NUCLEOTIDE SEQUENCE [MRNA]</scope>
    <scope>PROTEIN SEQUENCE OF 8-20; 76-83; 112-118 AND 121-133</scope>
    <source>
        <tissue>Epidermis</tissue>
    </source>
</reference>
<reference key="2">
    <citation type="journal article" date="1995" name="Dev. Biol.">
        <title>Galectin-7, a human 14-kDa S-lectin, specifically expressed in keratinocytes and sensitive to retinoic acid.</title>
        <authorList>
            <person name="Magnaldo T."/>
            <person name="Bernerd F."/>
            <person name="Darmon M."/>
        </authorList>
    </citation>
    <scope>NUCLEOTIDE SEQUENCE [MRNA]</scope>
    <source>
        <tissue>Epidermis</tissue>
    </source>
</reference>
<reference key="3">
    <citation type="submission" date="2004-06" db="EMBL/GenBank/DDBJ databases">
        <title>Cloning of human full open reading frames in Gateway(TM) system entry vector (pDONR201).</title>
        <authorList>
            <person name="Ebert L."/>
            <person name="Schick M."/>
            <person name="Neubert P."/>
            <person name="Schatten R."/>
            <person name="Henze S."/>
            <person name="Korn B."/>
        </authorList>
    </citation>
    <scope>NUCLEOTIDE SEQUENCE [LARGE SCALE MRNA]</scope>
</reference>
<reference key="4">
    <citation type="submission" date="2005-07" db="EMBL/GenBank/DDBJ databases">
        <authorList>
            <person name="Mural R.J."/>
            <person name="Istrail S."/>
            <person name="Sutton G.G."/>
            <person name="Florea L."/>
            <person name="Halpern A.L."/>
            <person name="Mobarry C.M."/>
            <person name="Lippert R."/>
            <person name="Walenz B."/>
            <person name="Shatkay H."/>
            <person name="Dew I."/>
            <person name="Miller J.R."/>
            <person name="Flanigan M.J."/>
            <person name="Edwards N.J."/>
            <person name="Bolanos R."/>
            <person name="Fasulo D."/>
            <person name="Halldorsson B.V."/>
            <person name="Hannenhalli S."/>
            <person name="Turner R."/>
            <person name="Yooseph S."/>
            <person name="Lu F."/>
            <person name="Nusskern D.R."/>
            <person name="Shue B.C."/>
            <person name="Zheng X.H."/>
            <person name="Zhong F."/>
            <person name="Delcher A.L."/>
            <person name="Huson D.H."/>
            <person name="Kravitz S.A."/>
            <person name="Mouchard L."/>
            <person name="Reinert K."/>
            <person name="Remington K.A."/>
            <person name="Clark A.G."/>
            <person name="Waterman M.S."/>
            <person name="Eichler E.E."/>
            <person name="Adams M.D."/>
            <person name="Hunkapiller M.W."/>
            <person name="Myers E.W."/>
            <person name="Venter J.C."/>
        </authorList>
    </citation>
    <scope>NUCLEOTIDE SEQUENCE [LARGE SCALE GENOMIC DNA]</scope>
</reference>
<reference key="5">
    <citation type="journal article" date="2004" name="Genome Res.">
        <title>The status, quality, and expansion of the NIH full-length cDNA project: the Mammalian Gene Collection (MGC).</title>
        <authorList>
            <consortium name="The MGC Project Team"/>
        </authorList>
    </citation>
    <scope>NUCLEOTIDE SEQUENCE [LARGE SCALE MRNA]</scope>
    <source>
        <tissue>Brain</tissue>
        <tissue>PNS</tissue>
    </source>
</reference>
<reference key="6">
    <citation type="journal article" date="2002" name="J. Biol. Chem.">
        <title>Galectin-7 (PIG1) exhibits pro-apoptotic function through JNK activation and mitochondrial cytochrome c release.</title>
        <authorList>
            <person name="Kuwabara I."/>
            <person name="Kuwabara Y."/>
            <person name="Yang R.Y."/>
            <person name="Schuler M."/>
            <person name="Green D.R."/>
            <person name="Zuraw B.L."/>
            <person name="Hsu D.K."/>
            <person name="Liu F.T."/>
        </authorList>
    </citation>
    <scope>FUNCTION</scope>
    <scope>SUBCELLULAR LOCATION</scope>
</reference>
<reference key="7">
    <citation type="journal article" date="1998" name="Biochemistry">
        <title>Structural basis for the recognition of carbohydrates by human galectin-7.</title>
        <authorList>
            <person name="Leonidas D.D."/>
            <person name="Vatzaki E.H."/>
            <person name="Vorum H."/>
            <person name="Celis J.E."/>
            <person name="Madsen P."/>
            <person name="Acharya K.R."/>
        </authorList>
    </citation>
    <scope>X-RAY CRYSTALLOGRAPHY (1.9 ANGSTROMS)</scope>
</reference>
<protein>
    <recommendedName>
        <fullName>Galectin-7</fullName>
        <shortName>Gal-7</shortName>
    </recommendedName>
    <alternativeName>
        <fullName>HKL-14</fullName>
    </alternativeName>
    <alternativeName>
        <fullName>PI7</fullName>
    </alternativeName>
    <alternativeName>
        <fullName>p53-induced gene 1 protein</fullName>
    </alternativeName>
</protein>
<sequence length="136" mass="15075">MSNVPHKSSLPEGIRPGTVLRIRGLVPPNASRFHVNLLCGEEQGSDAALHFNPRLDTSEVVFNSKEQGSWGREERGPGVPFQRGQPFEVLIIASDDGFKAVVGDAQYHHFRHRLPLARVRLVEVGGDVQLDSVRIF</sequence>
<proteinExistence type="evidence at protein level"/>
<organism>
    <name type="scientific">Homo sapiens</name>
    <name type="common">Human</name>
    <dbReference type="NCBI Taxonomy" id="9606"/>
    <lineage>
        <taxon>Eukaryota</taxon>
        <taxon>Metazoa</taxon>
        <taxon>Chordata</taxon>
        <taxon>Craniata</taxon>
        <taxon>Vertebrata</taxon>
        <taxon>Euteleostomi</taxon>
        <taxon>Mammalia</taxon>
        <taxon>Eutheria</taxon>
        <taxon>Euarchontoglires</taxon>
        <taxon>Primates</taxon>
        <taxon>Haplorrhini</taxon>
        <taxon>Catarrhini</taxon>
        <taxon>Hominidae</taxon>
        <taxon>Homo</taxon>
    </lineage>
</organism>
<name>LEG7_HUMAN</name>
<comment type="function">
    <text evidence="3">Could be involved in cell-cell and/or cell-matrix interactions necessary for normal growth control. Pro-apoptotic protein that functions intracellularly upstream of JNK activation and cytochrome c release.</text>
</comment>
<comment type="subunit">
    <text>Monomer.</text>
</comment>
<comment type="interaction">
    <interactant intactId="EBI-357504">
        <id>P47929</id>
    </interactant>
    <interactant intactId="EBI-742054">
        <id>Q96D03</id>
        <label>DDIT4L</label>
    </interactant>
    <organismsDiffer>false</organismsDiffer>
    <experiments>3</experiments>
</comment>
<comment type="interaction">
    <interactant intactId="EBI-357504">
        <id>P47929</id>
    </interactant>
    <interactant intactId="EBI-355106">
        <id>P17066</id>
        <label>HSPA6</label>
    </interactant>
    <organismsDiffer>false</organismsDiffer>
    <experiments>3</experiments>
</comment>
<comment type="interaction">
    <interactant intactId="EBI-357504">
        <id>P47929</id>
    </interactant>
    <interactant intactId="EBI-347416">
        <id>Q9Y333</id>
        <label>LSM2</label>
    </interactant>
    <organismsDiffer>false</organismsDiffer>
    <experiments>3</experiments>
</comment>
<comment type="interaction">
    <interactant intactId="EBI-357504">
        <id>P47929</id>
    </interactant>
    <interactant intactId="EBI-353460">
        <id>Q04837</id>
        <label>SSBP1</label>
    </interactant>
    <organismsDiffer>false</organismsDiffer>
    <experiments>6</experiments>
</comment>
<comment type="interaction">
    <interactant intactId="EBI-357504">
        <id>P47929</id>
    </interactant>
    <interactant intactId="EBI-358643">
        <id>Q15750</id>
        <label>TAB1</label>
    </interactant>
    <organismsDiffer>false</organismsDiffer>
    <experiments>3</experiments>
</comment>
<comment type="interaction">
    <interactant intactId="EBI-357504">
        <id>P47929</id>
    </interactant>
    <interactant intactId="EBI-12027348">
        <id>O43548</id>
        <label>TGM5</label>
    </interactant>
    <organismsDiffer>false</organismsDiffer>
    <experiments>3</experiments>
</comment>
<comment type="interaction">
    <interactant intactId="EBI-357504">
        <id>P47929</id>
    </interactant>
    <interactant intactId="EBI-12111538">
        <id>Q8IY57-5</id>
        <label>YAF2</label>
    </interactant>
    <organismsDiffer>false</organismsDiffer>
    <experiments>3</experiments>
</comment>
<comment type="interaction">
    <interactant intactId="EBI-357504">
        <id>P47929</id>
    </interactant>
    <interactant intactId="EBI-25474821">
        <id>P0DTC2</id>
        <label>S</label>
    </interactant>
    <organismsDiffer>true</organismsDiffer>
    <experiments>2</experiments>
</comment>
<comment type="subcellular location">
    <subcellularLocation>
        <location evidence="3">Cytoplasm</location>
    </subcellularLocation>
    <subcellularLocation>
        <location evidence="3">Nucleus</location>
    </subcellularLocation>
    <subcellularLocation>
        <location evidence="4">Secreted</location>
    </subcellularLocation>
    <text>May be secreted by a non-classical secretory pathway.</text>
</comment>
<comment type="tissue specificity">
    <text>Mainly expressed in stratified squamous epithelium.</text>
</comment>
<comment type="induction">
    <text>By p53/TP53.</text>
</comment>
<comment type="online information" name="Functional Glycomics Gateway - Glycan Binding">
    <link uri="http://www.functionalglycomics.org/glycomics/GBPServlet?&amp;operationType=view&amp;cbpId=cbp_hum_Stlect_00143"/>
    <text>Galectin-7</text>
</comment>
<keyword id="KW-0002">3D-structure</keyword>
<keyword id="KW-0053">Apoptosis</keyword>
<keyword id="KW-0963">Cytoplasm</keyword>
<keyword id="KW-0903">Direct protein sequencing</keyword>
<keyword id="KW-0430">Lectin</keyword>
<keyword id="KW-0539">Nucleus</keyword>
<keyword id="KW-1267">Proteomics identification</keyword>
<keyword id="KW-1185">Reference proteome</keyword>
<keyword id="KW-0964">Secreted</keyword>
<feature type="chain" id="PRO_0000076940" description="Galectin-7">
    <location>
        <begin position="1"/>
        <end position="136"/>
    </location>
</feature>
<feature type="domain" description="Galectin" evidence="2">
    <location>
        <begin position="6"/>
        <end position="136"/>
    </location>
</feature>
<feature type="binding site" evidence="1">
    <location>
        <begin position="70"/>
        <end position="76"/>
    </location>
    <ligand>
        <name>a beta-D-galactoside</name>
        <dbReference type="ChEBI" id="CHEBI:28034"/>
    </ligand>
</feature>
<feature type="strand" evidence="5">
    <location>
        <begin position="6"/>
        <end position="9"/>
    </location>
</feature>
<feature type="strand" evidence="5">
    <location>
        <begin position="16"/>
        <end position="26"/>
    </location>
</feature>
<feature type="strand" evidence="5">
    <location>
        <begin position="32"/>
        <end position="42"/>
    </location>
</feature>
<feature type="strand" evidence="5">
    <location>
        <begin position="47"/>
        <end position="54"/>
    </location>
</feature>
<feature type="turn" evidence="5">
    <location>
        <begin position="55"/>
        <end position="58"/>
    </location>
</feature>
<feature type="strand" evidence="5">
    <location>
        <begin position="59"/>
        <end position="66"/>
    </location>
</feature>
<feature type="strand" evidence="5">
    <location>
        <begin position="85"/>
        <end position="93"/>
    </location>
</feature>
<feature type="strand" evidence="5">
    <location>
        <begin position="95"/>
        <end position="102"/>
    </location>
</feature>
<feature type="strand" evidence="5">
    <location>
        <begin position="105"/>
        <end position="111"/>
    </location>
</feature>
<feature type="helix" evidence="5">
    <location>
        <begin position="116"/>
        <end position="118"/>
    </location>
</feature>
<feature type="strand" evidence="5">
    <location>
        <begin position="121"/>
        <end position="127"/>
    </location>
</feature>
<feature type="strand" evidence="5">
    <location>
        <begin position="129"/>
        <end position="135"/>
    </location>
</feature>
<gene>
    <name type="primary">LGALS7</name>
    <name type="synonym">PIG1</name>
</gene>
<gene>
    <name type="primary">LGALS7B</name>
</gene>